<proteinExistence type="evidence at protein level"/>
<keyword id="KW-0378">Hydrolase</keyword>
<keyword id="KW-0479">Metal-binding</keyword>
<keyword id="KW-0533">Nickel</keyword>
<sequence length="843" mass="90520">MKLVQREAEKLALHNAGFLAQKRLARGLRLNYTEAVALIAAQILEFVRDGDRTVTDLMDLGKQLLGRRQVLPAVPHLLETVQVEGTFMDGTKLITVHDPISSDDGNLELALHGSFLPVPSLEKFSSVGVDDFPGEVRFCSGHIVLNLHRRALTLKVVNKADRPIQIGSHYHFIEANPYLVFDRQRAYGMRLNIPAGTAVRFEPGDAKTVTLVSIGGRKVIRGGNGIADGAVNRSQLNEVMEKVIAKGFGHEDYPDSSEGIIGDGTHDYIVDHEKYASMYGPTTGDKIRLGDTDLFAEIEKDYAIYGDECIFGGGKVLRDGMGQSAGYPASDCLDTVVTNAVVIDYTGIYKADIGINGGLIVAIGKAGNPDVMDMDGVNEEMIVGVNTEVIAAEGMIVTAGGIDCHVHFICPQLAEEAIASGITTLVGGGTGPAHGTCATTCTPSPSHMKLMLQSTDELPINMGFTGKGNTTKPDGLAEIIKAGAMGLKLHEDWGSTPAAIDNCLSVAEAFDIQVNIHTDTLNESGCVEHTIAAFKDRTIHTYHSEGAGGGHAPDIIKVCGVKNVLPSSTNPTRPFTLNTVDEHLDMLMVCHHLDRNIPEDVAFAESRIRAETIAAEDILHDMGAISIISSDSQAMGRIGEVITRTWQTANKMKRQRGRLPISSSPDAAEDNDNFRIRRYIAKYTINPAIVNGFSDFVGSVEVGKLADLVIWKPSFFGAKPEMVIKGGAIACANMGDPNASIPTPEPVMMRPMFGAFGGAGSANSIAFVSKAAKEAGVAVQYKLGKRVEAVGRVRGLTKLNMKLNDALPKIDVDPETYTVTADGEVLRCQPTPTVPLSRNYFLF</sequence>
<accession>E0ZS48</accession>
<organism>
    <name type="scientific">Oryza sativa subsp. indica</name>
    <name type="common">Rice</name>
    <dbReference type="NCBI Taxonomy" id="39946"/>
    <lineage>
        <taxon>Eukaryota</taxon>
        <taxon>Viridiplantae</taxon>
        <taxon>Streptophyta</taxon>
        <taxon>Embryophyta</taxon>
        <taxon>Tracheophyta</taxon>
        <taxon>Spermatophyta</taxon>
        <taxon>Magnoliopsida</taxon>
        <taxon>Liliopsida</taxon>
        <taxon>Poales</taxon>
        <taxon>Poaceae</taxon>
        <taxon>BOP clade</taxon>
        <taxon>Oryzoideae</taxon>
        <taxon>Oryzeae</taxon>
        <taxon>Oryzinae</taxon>
        <taxon>Oryza</taxon>
        <taxon>Oryza sativa</taxon>
    </lineage>
</organism>
<protein>
    <recommendedName>
        <fullName evidence="4">Urease</fullName>
        <ecNumber evidence="3">3.5.1.5</ecNumber>
    </recommendedName>
    <alternativeName>
        <fullName evidence="2">Urea amidohydrolase</fullName>
    </alternativeName>
</protein>
<comment type="function">
    <text evidence="3">Urea hydrolase involved in nitrogen recycling from ureide, purine, and arginine catabolism.</text>
</comment>
<comment type="catalytic activity">
    <reaction evidence="3">
        <text>urea + 2 H2O + H(+) = hydrogencarbonate + 2 NH4(+)</text>
        <dbReference type="Rhea" id="RHEA:20557"/>
        <dbReference type="ChEBI" id="CHEBI:15377"/>
        <dbReference type="ChEBI" id="CHEBI:15378"/>
        <dbReference type="ChEBI" id="CHEBI:16199"/>
        <dbReference type="ChEBI" id="CHEBI:17544"/>
        <dbReference type="ChEBI" id="CHEBI:28938"/>
        <dbReference type="EC" id="3.5.1.5"/>
    </reaction>
    <physiologicalReaction direction="left-to-right" evidence="3">
        <dbReference type="Rhea" id="RHEA:20558"/>
    </physiologicalReaction>
</comment>
<comment type="cofactor">
    <cofactor evidence="2">
        <name>Ni(2+)</name>
        <dbReference type="ChEBI" id="CHEBI:49786"/>
    </cofactor>
    <text evidence="2">Binds 2 nickel ions per subunit.</text>
</comment>
<comment type="biophysicochemical properties">
    <kinetics>
        <KM evidence="3">0.53 mM for urea</KM>
    </kinetics>
</comment>
<comment type="pathway">
    <text evidence="5">Nitrogen metabolism; urea degradation; CO(2) and NH(3) from urea (urease route): step 1/1.</text>
</comment>
<comment type="subunit">
    <text evidence="1">Homohexamer. Other oligomeric forms may exist depending on pH and presence of salts.</text>
</comment>
<comment type="PTM">
    <text evidence="1">Carboxylation allows a single lysine to coordinate two nickel ions.</text>
</comment>
<comment type="similarity">
    <text evidence="5">In the C-terminal section; belongs to the metallo-dependent hydrolases superfamily. Urease alpha subunit family.</text>
</comment>
<name>UREA_ORYSI</name>
<dbReference type="EC" id="3.5.1.5" evidence="3"/>
<dbReference type="EMBL" id="HM369060">
    <property type="protein sequence ID" value="ADK73999.1"/>
    <property type="molecule type" value="mRNA"/>
</dbReference>
<dbReference type="SMR" id="E0ZS48"/>
<dbReference type="SABIO-RK" id="E0ZS48"/>
<dbReference type="UniPathway" id="UPA00258">
    <property type="reaction ID" value="UER00370"/>
</dbReference>
<dbReference type="GO" id="GO:0035550">
    <property type="term" value="C:urease complex"/>
    <property type="evidence" value="ECO:0007669"/>
    <property type="project" value="InterPro"/>
</dbReference>
<dbReference type="GO" id="GO:0016151">
    <property type="term" value="F:nickel cation binding"/>
    <property type="evidence" value="ECO:0007669"/>
    <property type="project" value="InterPro"/>
</dbReference>
<dbReference type="GO" id="GO:0009039">
    <property type="term" value="F:urease activity"/>
    <property type="evidence" value="ECO:0000314"/>
    <property type="project" value="UniProtKB"/>
</dbReference>
<dbReference type="GO" id="GO:0043419">
    <property type="term" value="P:urea catabolic process"/>
    <property type="evidence" value="ECO:0000314"/>
    <property type="project" value="UniProtKB"/>
</dbReference>
<dbReference type="CDD" id="cd00375">
    <property type="entry name" value="Urease_alpha"/>
    <property type="match status" value="1"/>
</dbReference>
<dbReference type="CDD" id="cd00407">
    <property type="entry name" value="Urease_beta"/>
    <property type="match status" value="1"/>
</dbReference>
<dbReference type="CDD" id="cd00390">
    <property type="entry name" value="Urease_gamma"/>
    <property type="match status" value="1"/>
</dbReference>
<dbReference type="FunFam" id="2.10.150.10:FF:000002">
    <property type="entry name" value="Urease"/>
    <property type="match status" value="1"/>
</dbReference>
<dbReference type="FunFam" id="3.30.280.10:FF:000001">
    <property type="entry name" value="Urease subunit alpha"/>
    <property type="match status" value="1"/>
</dbReference>
<dbReference type="Gene3D" id="3.20.20.140">
    <property type="entry name" value="Metal-dependent hydrolases"/>
    <property type="match status" value="1"/>
</dbReference>
<dbReference type="Gene3D" id="2.10.150.10">
    <property type="entry name" value="Urease, beta subunit"/>
    <property type="match status" value="1"/>
</dbReference>
<dbReference type="Gene3D" id="3.30.280.10">
    <property type="entry name" value="Urease, gamma-like subunit"/>
    <property type="match status" value="1"/>
</dbReference>
<dbReference type="Gene3D" id="2.30.40.10">
    <property type="entry name" value="Urease, subunit C, domain 1"/>
    <property type="match status" value="1"/>
</dbReference>
<dbReference type="HAMAP" id="MF_01953">
    <property type="entry name" value="Urease_alpha"/>
    <property type="match status" value="1"/>
</dbReference>
<dbReference type="HAMAP" id="MF_01954">
    <property type="entry name" value="Urease_beta"/>
    <property type="match status" value="1"/>
</dbReference>
<dbReference type="InterPro" id="IPR006680">
    <property type="entry name" value="Amidohydro-rel"/>
</dbReference>
<dbReference type="InterPro" id="IPR011059">
    <property type="entry name" value="Metal-dep_hydrolase_composite"/>
</dbReference>
<dbReference type="InterPro" id="IPR032466">
    <property type="entry name" value="Metal_Hydrolase"/>
</dbReference>
<dbReference type="InterPro" id="IPR008221">
    <property type="entry name" value="Urease"/>
</dbReference>
<dbReference type="InterPro" id="IPR011612">
    <property type="entry name" value="Urease_alpha_N_dom"/>
</dbReference>
<dbReference type="InterPro" id="IPR050112">
    <property type="entry name" value="Urease_alpha_subunit"/>
</dbReference>
<dbReference type="InterPro" id="IPR017950">
    <property type="entry name" value="Urease_AS"/>
</dbReference>
<dbReference type="InterPro" id="IPR005848">
    <property type="entry name" value="Urease_asu"/>
</dbReference>
<dbReference type="InterPro" id="IPR017951">
    <property type="entry name" value="Urease_asu_c"/>
</dbReference>
<dbReference type="InterPro" id="IPR002019">
    <property type="entry name" value="Urease_beta-like"/>
</dbReference>
<dbReference type="InterPro" id="IPR036461">
    <property type="entry name" value="Urease_betasu_sf"/>
</dbReference>
<dbReference type="InterPro" id="IPR002026">
    <property type="entry name" value="Urease_gamma/gamma-beta_su"/>
</dbReference>
<dbReference type="InterPro" id="IPR036463">
    <property type="entry name" value="Urease_gamma_sf"/>
</dbReference>
<dbReference type="InterPro" id="IPR040881">
    <property type="entry name" value="Urease_linker"/>
</dbReference>
<dbReference type="InterPro" id="IPR029754">
    <property type="entry name" value="Urease_Ni-bd"/>
</dbReference>
<dbReference type="NCBIfam" id="NF009671">
    <property type="entry name" value="PRK13192.1"/>
    <property type="match status" value="1"/>
</dbReference>
<dbReference type="NCBIfam" id="NF009682">
    <property type="entry name" value="PRK13203.1"/>
    <property type="match status" value="1"/>
</dbReference>
<dbReference type="NCBIfam" id="NF009686">
    <property type="entry name" value="PRK13207.1"/>
    <property type="match status" value="1"/>
</dbReference>
<dbReference type="NCBIfam" id="TIGR01792">
    <property type="entry name" value="urease_alph"/>
    <property type="match status" value="1"/>
</dbReference>
<dbReference type="NCBIfam" id="TIGR00192">
    <property type="entry name" value="urease_beta"/>
    <property type="match status" value="1"/>
</dbReference>
<dbReference type="NCBIfam" id="TIGR00193">
    <property type="entry name" value="urease_gam"/>
    <property type="match status" value="1"/>
</dbReference>
<dbReference type="PANTHER" id="PTHR43440">
    <property type="entry name" value="UREASE"/>
    <property type="match status" value="1"/>
</dbReference>
<dbReference type="PANTHER" id="PTHR43440:SF1">
    <property type="entry name" value="UREASE"/>
    <property type="match status" value="1"/>
</dbReference>
<dbReference type="Pfam" id="PF01979">
    <property type="entry name" value="Amidohydro_1"/>
    <property type="match status" value="1"/>
</dbReference>
<dbReference type="Pfam" id="PF00449">
    <property type="entry name" value="Urease_alpha"/>
    <property type="match status" value="1"/>
</dbReference>
<dbReference type="Pfam" id="PF00699">
    <property type="entry name" value="Urease_beta"/>
    <property type="match status" value="1"/>
</dbReference>
<dbReference type="Pfam" id="PF00547">
    <property type="entry name" value="Urease_gamma"/>
    <property type="match status" value="1"/>
</dbReference>
<dbReference type="Pfam" id="PF18473">
    <property type="entry name" value="Urease_linker"/>
    <property type="match status" value="1"/>
</dbReference>
<dbReference type="PIRSF" id="PIRSF001222">
    <property type="entry name" value="Urease"/>
    <property type="match status" value="1"/>
</dbReference>
<dbReference type="PRINTS" id="PR01752">
    <property type="entry name" value="UREASE"/>
</dbReference>
<dbReference type="SUPFAM" id="SSF51338">
    <property type="entry name" value="Composite domain of metallo-dependent hydrolases"/>
    <property type="match status" value="2"/>
</dbReference>
<dbReference type="SUPFAM" id="SSF51556">
    <property type="entry name" value="Metallo-dependent hydrolases"/>
    <property type="match status" value="1"/>
</dbReference>
<dbReference type="SUPFAM" id="SSF51278">
    <property type="entry name" value="Urease, beta-subunit"/>
    <property type="match status" value="1"/>
</dbReference>
<dbReference type="SUPFAM" id="SSF54111">
    <property type="entry name" value="Urease, gamma-subunit"/>
    <property type="match status" value="1"/>
</dbReference>
<dbReference type="PROSITE" id="PS01120">
    <property type="entry name" value="UREASE_1"/>
    <property type="match status" value="1"/>
</dbReference>
<dbReference type="PROSITE" id="PS00145">
    <property type="entry name" value="UREASE_2"/>
    <property type="match status" value="1"/>
</dbReference>
<dbReference type="PROSITE" id="PS51368">
    <property type="entry name" value="UREASE_3"/>
    <property type="match status" value="1"/>
</dbReference>
<feature type="chain" id="PRO_0000424247" description="Urease">
    <location>
        <begin position="1"/>
        <end position="843"/>
    </location>
</feature>
<feature type="domain" description="Urease" evidence="2">
    <location>
        <begin position="400"/>
        <end position="843"/>
    </location>
</feature>
<feature type="active site" description="Proton donor" evidence="2">
    <location>
        <position position="591"/>
    </location>
</feature>
<feature type="binding site" evidence="2">
    <location>
        <position position="405"/>
    </location>
    <ligand>
        <name>Ni(2+)</name>
        <dbReference type="ChEBI" id="CHEBI:49786"/>
        <label>1</label>
    </ligand>
</feature>
<feature type="binding site" evidence="2">
    <location>
        <position position="407"/>
    </location>
    <ligand>
        <name>Ni(2+)</name>
        <dbReference type="ChEBI" id="CHEBI:49786"/>
        <label>1</label>
    </ligand>
</feature>
<feature type="binding site" description="via carbamate group" evidence="2">
    <location>
        <position position="488"/>
    </location>
    <ligand>
        <name>Ni(2+)</name>
        <dbReference type="ChEBI" id="CHEBI:49786"/>
        <label>1</label>
    </ligand>
</feature>
<feature type="binding site" description="via carbamate group" evidence="2">
    <location>
        <position position="488"/>
    </location>
    <ligand>
        <name>Ni(2+)</name>
        <dbReference type="ChEBI" id="CHEBI:49786"/>
        <label>2</label>
    </ligand>
</feature>
<feature type="binding site" evidence="2">
    <location>
        <position position="490"/>
    </location>
    <ligand>
        <name>substrate</name>
    </ligand>
</feature>
<feature type="binding site" evidence="2">
    <location>
        <position position="517"/>
    </location>
    <ligand>
        <name>Ni(2+)</name>
        <dbReference type="ChEBI" id="CHEBI:49786"/>
        <label>2</label>
    </ligand>
</feature>
<feature type="binding site" evidence="2">
    <location>
        <position position="543"/>
    </location>
    <ligand>
        <name>Ni(2+)</name>
        <dbReference type="ChEBI" id="CHEBI:49786"/>
        <label>2</label>
    </ligand>
</feature>
<feature type="binding site" evidence="2">
    <location>
        <position position="631"/>
    </location>
    <ligand>
        <name>Ni(2+)</name>
        <dbReference type="ChEBI" id="CHEBI:49786"/>
        <label>1</label>
    </ligand>
</feature>
<feature type="modified residue" description="N6-carboxylysine" evidence="1">
    <location>
        <position position="488"/>
    </location>
</feature>
<reference key="1">
    <citation type="journal article" date="2010" name="Plant Physiol.">
        <title>Identification and characterization of proteins involved in rice urea and arginine catabolism.</title>
        <authorList>
            <person name="Cao F.Q."/>
            <person name="Werner A.K."/>
            <person name="Dahncke K."/>
            <person name="Romeis T."/>
            <person name="Liu L.H."/>
            <person name="Witte C.P."/>
        </authorList>
    </citation>
    <scope>NUCLEOTIDE SEQUENCE [MRNA]</scope>
    <scope>FUNCTION</scope>
    <scope>CATALYTIC ACTIVITY</scope>
    <scope>BIOPHYSICOCHEMICAL PROPERTIES</scope>
    <source>
        <strain>cv. Hunan Late 2</strain>
    </source>
</reference>
<evidence type="ECO:0000250" key="1">
    <source>
        <dbReference type="UniProtKB" id="P07374"/>
    </source>
</evidence>
<evidence type="ECO:0000255" key="2">
    <source>
        <dbReference type="PROSITE-ProRule" id="PRU00700"/>
    </source>
</evidence>
<evidence type="ECO:0000269" key="3">
    <source>
    </source>
</evidence>
<evidence type="ECO:0000303" key="4">
    <source>
    </source>
</evidence>
<evidence type="ECO:0000305" key="5"/>